<feature type="transit peptide" description="Mitochondrion" evidence="3">
    <location>
        <begin position="1"/>
        <end position="27"/>
    </location>
</feature>
<feature type="chain" id="PRO_0000437997" description="Mitochondrial import inner membrane translocase subunit PAM16 like 2">
    <location>
        <begin position="28"/>
        <end position="116"/>
    </location>
</feature>
<feature type="region of interest" description="J-like" evidence="1">
    <location>
        <begin position="57"/>
        <end position="106"/>
    </location>
</feature>
<dbReference type="EMBL" id="AY112727">
    <property type="protein sequence ID" value="AAM63549.1"/>
    <property type="molecule type" value="Genomic_DNA"/>
</dbReference>
<dbReference type="EMBL" id="AL356014">
    <property type="protein sequence ID" value="CAB91598.1"/>
    <property type="status" value="ALT_SEQ"/>
    <property type="molecule type" value="Genomic_DNA"/>
</dbReference>
<dbReference type="EMBL" id="CP002686">
    <property type="protein sequence ID" value="AEE79899.1"/>
    <property type="molecule type" value="Genomic_DNA"/>
</dbReference>
<dbReference type="EMBL" id="AF380643">
    <property type="protein sequence ID" value="AAK55724.1"/>
    <property type="molecule type" value="mRNA"/>
</dbReference>
<dbReference type="EMBL" id="AY054136">
    <property type="protein sequence ID" value="AAL06797.1"/>
    <property type="molecule type" value="mRNA"/>
</dbReference>
<dbReference type="PIR" id="T48996">
    <property type="entry name" value="T48996"/>
</dbReference>
<dbReference type="RefSeq" id="NP_567078.1">
    <property type="nucleotide sequence ID" value="NM_115790.3"/>
</dbReference>
<dbReference type="SMR" id="Q93VV9"/>
<dbReference type="FunCoup" id="Q93VV9">
    <property type="interactions" value="2844"/>
</dbReference>
<dbReference type="STRING" id="3702.Q93VV9"/>
<dbReference type="PaxDb" id="3702-AT3G59280.1"/>
<dbReference type="EnsemblPlants" id="AT3G59280.1">
    <property type="protein sequence ID" value="AT3G59280.1"/>
    <property type="gene ID" value="AT3G59280"/>
</dbReference>
<dbReference type="GeneID" id="825097"/>
<dbReference type="Gramene" id="AT3G59280.1">
    <property type="protein sequence ID" value="AT3G59280.1"/>
    <property type="gene ID" value="AT3G59280"/>
</dbReference>
<dbReference type="KEGG" id="ath:AT3G59280"/>
<dbReference type="Araport" id="AT3G59280"/>
<dbReference type="TAIR" id="AT3G59280">
    <property type="gene designation" value="TXR1"/>
</dbReference>
<dbReference type="eggNOG" id="KOG3442">
    <property type="taxonomic scope" value="Eukaryota"/>
</dbReference>
<dbReference type="HOGENOM" id="CLU_101461_2_0_1"/>
<dbReference type="InParanoid" id="Q93VV9"/>
<dbReference type="OrthoDB" id="10262892at2759"/>
<dbReference type="PhylomeDB" id="Q93VV9"/>
<dbReference type="PRO" id="PR:Q93VV9"/>
<dbReference type="Proteomes" id="UP000006548">
    <property type="component" value="Chromosome 3"/>
</dbReference>
<dbReference type="ExpressionAtlas" id="Q93VV9">
    <property type="expression patterns" value="baseline and differential"/>
</dbReference>
<dbReference type="GO" id="GO:0005737">
    <property type="term" value="C:cytoplasm"/>
    <property type="evidence" value="ECO:0000314"/>
    <property type="project" value="UniProtKB"/>
</dbReference>
<dbReference type="GO" id="GO:0005743">
    <property type="term" value="C:mitochondrial inner membrane"/>
    <property type="evidence" value="ECO:0000314"/>
    <property type="project" value="TAIR"/>
</dbReference>
<dbReference type="GO" id="GO:0005739">
    <property type="term" value="C:mitochondrion"/>
    <property type="evidence" value="ECO:0007005"/>
    <property type="project" value="TAIR"/>
</dbReference>
<dbReference type="GO" id="GO:0005744">
    <property type="term" value="C:TIM23 mitochondrial import inner membrane translocase complex"/>
    <property type="evidence" value="ECO:0007669"/>
    <property type="project" value="InterPro"/>
</dbReference>
<dbReference type="GO" id="GO:0009734">
    <property type="term" value="P:auxin-activated signaling pathway"/>
    <property type="evidence" value="ECO:0007669"/>
    <property type="project" value="UniProtKB-KW"/>
</dbReference>
<dbReference type="GO" id="GO:0006952">
    <property type="term" value="P:defense response"/>
    <property type="evidence" value="ECO:0007669"/>
    <property type="project" value="UniProtKB-KW"/>
</dbReference>
<dbReference type="GO" id="GO:0031348">
    <property type="term" value="P:negative regulation of defense response"/>
    <property type="evidence" value="ECO:0000315"/>
    <property type="project" value="TAIR"/>
</dbReference>
<dbReference type="GO" id="GO:1900425">
    <property type="term" value="P:negative regulation of defense response to bacterium"/>
    <property type="evidence" value="ECO:0000315"/>
    <property type="project" value="UniProtKB"/>
</dbReference>
<dbReference type="GO" id="GO:1902289">
    <property type="term" value="P:negative regulation of defense response to oomycetes"/>
    <property type="evidence" value="ECO:0000315"/>
    <property type="project" value="UniProtKB"/>
</dbReference>
<dbReference type="GO" id="GO:2000378">
    <property type="term" value="P:negative regulation of reactive oxygen species metabolic process"/>
    <property type="evidence" value="ECO:0000315"/>
    <property type="project" value="UniProtKB"/>
</dbReference>
<dbReference type="GO" id="GO:0030150">
    <property type="term" value="P:protein import into mitochondrial matrix"/>
    <property type="evidence" value="ECO:0007669"/>
    <property type="project" value="InterPro"/>
</dbReference>
<dbReference type="GO" id="GO:2000012">
    <property type="term" value="P:regulation of auxin polar transport"/>
    <property type="evidence" value="ECO:0000315"/>
    <property type="project" value="UniProtKB"/>
</dbReference>
<dbReference type="GO" id="GO:0002237">
    <property type="term" value="P:response to molecule of bacterial origin"/>
    <property type="evidence" value="ECO:0000315"/>
    <property type="project" value="UniProtKB"/>
</dbReference>
<dbReference type="GO" id="GO:0055085">
    <property type="term" value="P:transmembrane transport"/>
    <property type="evidence" value="ECO:0000315"/>
    <property type="project" value="UniProtKB"/>
</dbReference>
<dbReference type="FunFam" id="1.10.287.110:FF:000006">
    <property type="entry name" value="Import inner membrane translocase subunit TIM16"/>
    <property type="match status" value="1"/>
</dbReference>
<dbReference type="Gene3D" id="1.10.287.110">
    <property type="entry name" value="DnaJ domain"/>
    <property type="match status" value="1"/>
</dbReference>
<dbReference type="InterPro" id="IPR036869">
    <property type="entry name" value="J_dom_sf"/>
</dbReference>
<dbReference type="InterPro" id="IPR005341">
    <property type="entry name" value="Tim16"/>
</dbReference>
<dbReference type="PANTHER" id="PTHR12388">
    <property type="entry name" value="MITOCHONDRIA ASSOCIATED GRANULOCYTE MACROPHAGE CSF SIGNALING MOLECULE"/>
    <property type="match status" value="1"/>
</dbReference>
<dbReference type="PANTHER" id="PTHR12388:SF0">
    <property type="entry name" value="MITOCHONDRIAL IMPORT INNER MEMBRANE TRANSLOCASE SUBUNIT TIM16"/>
    <property type="match status" value="1"/>
</dbReference>
<dbReference type="Pfam" id="PF03656">
    <property type="entry name" value="Pam16"/>
    <property type="match status" value="1"/>
</dbReference>
<name>TM16B_ARATH</name>
<comment type="function">
    <text evidence="2 4 5 6">Regulates ATP-dependent protein translocation into the mitochondrial matrix (By similarity). Involved in the uptake of thaxtomin, a phytotoxin produced by Streptomyces bacteria, that causes dramatic cell swelling, reduced seedling growth, and inhibition of cellulose synthesis (PubMed:12897252, PubMed:23638731). Modulates polar auxin transport (PubMed:23638731). Involved in importing a negative regulator of plant immunity into mitochondria, thus protecting plants from over-accumulation of reactive oxygen species (ROS) and preventing autoimmunity. Confers sensitivity to virulent pathogens such as the oomycete H.arabidopsidis Noco2 and the bacteria P.syringae pv. maculicola ES4326 (PubMed:24153405).</text>
</comment>
<comment type="subcellular location">
    <subcellularLocation>
        <location evidence="6">Mitochondrion inner membrane</location>
        <topology evidence="6">Peripheral membrane protein</topology>
    </subcellularLocation>
    <subcellularLocation>
        <location evidence="4">Cytoplasm</location>
    </subcellularLocation>
</comment>
<comment type="tissue specificity">
    <text evidence="4 7">Expressed constitutively and ubiquitously, except in root tips, at low levels.</text>
</comment>
<comment type="developmental stage">
    <text evidence="7">Accumulates during senescence.</text>
</comment>
<comment type="induction">
    <text evidence="7">Induced by heat, salt and drought stresses.</text>
</comment>
<comment type="disruption phenotype">
    <text evidence="4 5 6">Reduced growth, especially at high temperatures (&gt;21 degrees Celsius), as well as warped and twisted leaves at the later rosette stage (PubMed:12897252, PubMed:23638731, PubMed:24153405). Increased resistance to thaxtomin, a phytotoxin produced by Streptomyces bacteria, due to reduced toxin uptake (PubMed:12897252). Enhanced tolerance to 1-napthylphthalamic acid (NPA), an auxin efflux transport inhibitor which blocks polar auxin transport. Increased tolerance to isoxaben (IXB), a cellulose biosynthesis inhibitor (CBI) (PubMed:23638731). In single mutants, enhanced resistance against virulent pathogens (e.g. oomycete H.arabidopsidis Noco2 and bacteria P.syringae pv. maculicola ES4326) associated with elevated reactive oxygen species (ROS) accumulation and higher expression of pathogenesis related genes PR-1 and PR-2 (PubMed:24153405). The double mutant Atpam16-1 Atpam16l is lethal (PubMed:24153405).</text>
</comment>
<comment type="similarity">
    <text evidence="11">Belongs to the TIM16/PAM16 family.</text>
</comment>
<comment type="sequence caution" evidence="11">
    <conflict type="erroneous gene model prediction">
        <sequence resource="EMBL-CDS" id="CAB91598"/>
    </conflict>
</comment>
<gene>
    <name evidence="10" type="primary">PAM16L2</name>
    <name evidence="9" type="synonym">MUSE5</name>
    <name evidence="9" type="synonym">PAM16</name>
    <name evidence="8" type="synonym">TXR1</name>
    <name evidence="12" type="ordered locus">At3g59280</name>
    <name evidence="13" type="ORF">F25L23.140</name>
</gene>
<evidence type="ECO:0000250" key="1">
    <source>
        <dbReference type="UniProtKB" id="P42949"/>
    </source>
</evidence>
<evidence type="ECO:0000250" key="2">
    <source>
        <dbReference type="UniProtKB" id="Q9Y3D7"/>
    </source>
</evidence>
<evidence type="ECO:0000255" key="3"/>
<evidence type="ECO:0000269" key="4">
    <source>
    </source>
</evidence>
<evidence type="ECO:0000269" key="5">
    <source>
    </source>
</evidence>
<evidence type="ECO:0000269" key="6">
    <source>
    </source>
</evidence>
<evidence type="ECO:0000269" key="7">
    <source>
    </source>
</evidence>
<evidence type="ECO:0000303" key="8">
    <source>
    </source>
</evidence>
<evidence type="ECO:0000303" key="9">
    <source>
    </source>
</evidence>
<evidence type="ECO:0000303" key="10">
    <source>
    </source>
</evidence>
<evidence type="ECO:0000305" key="11"/>
<evidence type="ECO:0000312" key="12">
    <source>
        <dbReference type="Araport" id="AT3G59280"/>
    </source>
</evidence>
<evidence type="ECO:0000312" key="13">
    <source>
        <dbReference type="EMBL" id="CAB91598.1"/>
    </source>
</evidence>
<organism>
    <name type="scientific">Arabidopsis thaliana</name>
    <name type="common">Mouse-ear cress</name>
    <dbReference type="NCBI Taxonomy" id="3702"/>
    <lineage>
        <taxon>Eukaryota</taxon>
        <taxon>Viridiplantae</taxon>
        <taxon>Streptophyta</taxon>
        <taxon>Embryophyta</taxon>
        <taxon>Tracheophyta</taxon>
        <taxon>Spermatophyta</taxon>
        <taxon>Magnoliopsida</taxon>
        <taxon>eudicotyledons</taxon>
        <taxon>Gunneridae</taxon>
        <taxon>Pentapetalae</taxon>
        <taxon>rosids</taxon>
        <taxon>malvids</taxon>
        <taxon>Brassicales</taxon>
        <taxon>Brassicaceae</taxon>
        <taxon>Camelineae</taxon>
        <taxon>Arabidopsis</taxon>
    </lineage>
</organism>
<keyword id="KW-0927">Auxin signaling pathway</keyword>
<keyword id="KW-0963">Cytoplasm</keyword>
<keyword id="KW-0472">Membrane</keyword>
<keyword id="KW-0496">Mitochondrion</keyword>
<keyword id="KW-0999">Mitochondrion inner membrane</keyword>
<keyword id="KW-0611">Plant defense</keyword>
<keyword id="KW-0653">Protein transport</keyword>
<keyword id="KW-1185">Reference proteome</keyword>
<keyword id="KW-0809">Transit peptide</keyword>
<keyword id="KW-0811">Translocation</keyword>
<keyword id="KW-0813">Transport</keyword>
<accession>Q93VV9</accession>
<accession>Q9LX43</accession>
<proteinExistence type="evidence at transcript level"/>
<sequence length="116" mass="12676">MAGRLLANLIVMGSGIIGRAVFQAYRQALANASKSGVAQEAMQNGVRQAGKAITEQEARQILGVTEKTSWEEILQKYDKLFENNAKAGSFYLQSKVHRAKECLEVVYRSQGNGTPS</sequence>
<protein>
    <recommendedName>
        <fullName evidence="10">Mitochondrial import inner membrane translocase subunit PAM16 like 2</fullName>
        <shortName evidence="9">AtPAM16</shortName>
        <shortName evidence="10">AtPAM16L2</shortName>
    </recommendedName>
    <alternativeName>
        <fullName evidence="1">Presequence translocated-associated motor subunit PAM16</fullName>
    </alternativeName>
    <alternativeName>
        <fullName evidence="9">Protein MUTANT SNC1-ENHANCING 5</fullName>
    </alternativeName>
    <alternativeName>
        <fullName evidence="8">Protein THAXTOMIN A RESISTANT 1</fullName>
    </alternativeName>
</protein>
<reference key="1">
    <citation type="journal article" date="2003" name="Plant Cell">
        <title>An Arabidopsis mutant resistant to thaxtomin A, a cellulose synthesis inhibitor from Streptomyces species.</title>
        <authorList>
            <person name="Scheible W.R."/>
            <person name="Fry B."/>
            <person name="Kochevenko A."/>
            <person name="Schindelasch D."/>
            <person name="Zimmerli L."/>
            <person name="Somerville S."/>
            <person name="Loria R."/>
            <person name="Somerville C.R."/>
        </authorList>
    </citation>
    <scope>NUCLEOTIDE SEQUENCE [GENOMIC DNA]</scope>
    <scope>FUNCTION</scope>
    <scope>DISRUPTION PHENOTYPE</scope>
    <scope>TISSUE SPECIFICITY</scope>
    <scope>SUBCELLULAR LOCATION</scope>
    <source>
        <strain>cv. Columbia</strain>
    </source>
</reference>
<reference key="2">
    <citation type="journal article" date="2000" name="Nature">
        <title>Sequence and analysis of chromosome 3 of the plant Arabidopsis thaliana.</title>
        <authorList>
            <person name="Salanoubat M."/>
            <person name="Lemcke K."/>
            <person name="Rieger M."/>
            <person name="Ansorge W."/>
            <person name="Unseld M."/>
            <person name="Fartmann B."/>
            <person name="Valle G."/>
            <person name="Bloecker H."/>
            <person name="Perez-Alonso M."/>
            <person name="Obermaier B."/>
            <person name="Delseny M."/>
            <person name="Boutry M."/>
            <person name="Grivell L.A."/>
            <person name="Mache R."/>
            <person name="Puigdomenech P."/>
            <person name="De Simone V."/>
            <person name="Choisne N."/>
            <person name="Artiguenave F."/>
            <person name="Robert C."/>
            <person name="Brottier P."/>
            <person name="Wincker P."/>
            <person name="Cattolico L."/>
            <person name="Weissenbach J."/>
            <person name="Saurin W."/>
            <person name="Quetier F."/>
            <person name="Schaefer M."/>
            <person name="Mueller-Auer S."/>
            <person name="Gabel C."/>
            <person name="Fuchs M."/>
            <person name="Benes V."/>
            <person name="Wurmbach E."/>
            <person name="Drzonek H."/>
            <person name="Erfle H."/>
            <person name="Jordan N."/>
            <person name="Bangert S."/>
            <person name="Wiedelmann R."/>
            <person name="Kranz H."/>
            <person name="Voss H."/>
            <person name="Holland R."/>
            <person name="Brandt P."/>
            <person name="Nyakatura G."/>
            <person name="Vezzi A."/>
            <person name="D'Angelo M."/>
            <person name="Pallavicini A."/>
            <person name="Toppo S."/>
            <person name="Simionati B."/>
            <person name="Conrad A."/>
            <person name="Hornischer K."/>
            <person name="Kauer G."/>
            <person name="Loehnert T.-H."/>
            <person name="Nordsiek G."/>
            <person name="Reichelt J."/>
            <person name="Scharfe M."/>
            <person name="Schoen O."/>
            <person name="Bargues M."/>
            <person name="Terol J."/>
            <person name="Climent J."/>
            <person name="Navarro P."/>
            <person name="Collado C."/>
            <person name="Perez-Perez A."/>
            <person name="Ottenwaelder B."/>
            <person name="Duchemin D."/>
            <person name="Cooke R."/>
            <person name="Laudie M."/>
            <person name="Berger-Llauro C."/>
            <person name="Purnelle B."/>
            <person name="Masuy D."/>
            <person name="de Haan M."/>
            <person name="Maarse A.C."/>
            <person name="Alcaraz J.-P."/>
            <person name="Cottet A."/>
            <person name="Casacuberta E."/>
            <person name="Monfort A."/>
            <person name="Argiriou A."/>
            <person name="Flores M."/>
            <person name="Liguori R."/>
            <person name="Vitale D."/>
            <person name="Mannhaupt G."/>
            <person name="Haase D."/>
            <person name="Schoof H."/>
            <person name="Rudd S."/>
            <person name="Zaccaria P."/>
            <person name="Mewes H.-W."/>
            <person name="Mayer K.F.X."/>
            <person name="Kaul S."/>
            <person name="Town C.D."/>
            <person name="Koo H.L."/>
            <person name="Tallon L.J."/>
            <person name="Jenkins J."/>
            <person name="Rooney T."/>
            <person name="Rizzo M."/>
            <person name="Walts A."/>
            <person name="Utterback T."/>
            <person name="Fujii C.Y."/>
            <person name="Shea T.P."/>
            <person name="Creasy T.H."/>
            <person name="Haas B."/>
            <person name="Maiti R."/>
            <person name="Wu D."/>
            <person name="Peterson J."/>
            <person name="Van Aken S."/>
            <person name="Pai G."/>
            <person name="Militscher J."/>
            <person name="Sellers P."/>
            <person name="Gill J.E."/>
            <person name="Feldblyum T.V."/>
            <person name="Preuss D."/>
            <person name="Lin X."/>
            <person name="Nierman W.C."/>
            <person name="Salzberg S.L."/>
            <person name="White O."/>
            <person name="Venter J.C."/>
            <person name="Fraser C.M."/>
            <person name="Kaneko T."/>
            <person name="Nakamura Y."/>
            <person name="Sato S."/>
            <person name="Kato T."/>
            <person name="Asamizu E."/>
            <person name="Sasamoto S."/>
            <person name="Kimura T."/>
            <person name="Idesawa K."/>
            <person name="Kawashima K."/>
            <person name="Kishida Y."/>
            <person name="Kiyokawa C."/>
            <person name="Kohara M."/>
            <person name="Matsumoto M."/>
            <person name="Matsuno A."/>
            <person name="Muraki A."/>
            <person name="Nakayama S."/>
            <person name="Nakazaki N."/>
            <person name="Shinpo S."/>
            <person name="Takeuchi C."/>
            <person name="Wada T."/>
            <person name="Watanabe A."/>
            <person name="Yamada M."/>
            <person name="Yasuda M."/>
            <person name="Tabata S."/>
        </authorList>
    </citation>
    <scope>NUCLEOTIDE SEQUENCE [LARGE SCALE GENOMIC DNA]</scope>
    <source>
        <strain>cv. Columbia</strain>
    </source>
</reference>
<reference key="3">
    <citation type="journal article" date="2017" name="Plant J.">
        <title>Araport11: a complete reannotation of the Arabidopsis thaliana reference genome.</title>
        <authorList>
            <person name="Cheng C.Y."/>
            <person name="Krishnakumar V."/>
            <person name="Chan A.P."/>
            <person name="Thibaud-Nissen F."/>
            <person name="Schobel S."/>
            <person name="Town C.D."/>
        </authorList>
    </citation>
    <scope>GENOME REANNOTATION</scope>
    <source>
        <strain>cv. Columbia</strain>
    </source>
</reference>
<reference key="4">
    <citation type="journal article" date="2003" name="Science">
        <title>Empirical analysis of transcriptional activity in the Arabidopsis genome.</title>
        <authorList>
            <person name="Yamada K."/>
            <person name="Lim J."/>
            <person name="Dale J.M."/>
            <person name="Chen H."/>
            <person name="Shinn P."/>
            <person name="Palm C.J."/>
            <person name="Southwick A.M."/>
            <person name="Wu H.C."/>
            <person name="Kim C.J."/>
            <person name="Nguyen M."/>
            <person name="Pham P.K."/>
            <person name="Cheuk R.F."/>
            <person name="Karlin-Newmann G."/>
            <person name="Liu S.X."/>
            <person name="Lam B."/>
            <person name="Sakano H."/>
            <person name="Wu T."/>
            <person name="Yu G."/>
            <person name="Miranda M."/>
            <person name="Quach H.L."/>
            <person name="Tripp M."/>
            <person name="Chang C.H."/>
            <person name="Lee J.M."/>
            <person name="Toriumi M.J."/>
            <person name="Chan M.M."/>
            <person name="Tang C.C."/>
            <person name="Onodera C.S."/>
            <person name="Deng J.M."/>
            <person name="Akiyama K."/>
            <person name="Ansari Y."/>
            <person name="Arakawa T."/>
            <person name="Banh J."/>
            <person name="Banno F."/>
            <person name="Bowser L."/>
            <person name="Brooks S.Y."/>
            <person name="Carninci P."/>
            <person name="Chao Q."/>
            <person name="Choy N."/>
            <person name="Enju A."/>
            <person name="Goldsmith A.D."/>
            <person name="Gurjal M."/>
            <person name="Hansen N.F."/>
            <person name="Hayashizaki Y."/>
            <person name="Johnson-Hopson C."/>
            <person name="Hsuan V.W."/>
            <person name="Iida K."/>
            <person name="Karnes M."/>
            <person name="Khan S."/>
            <person name="Koesema E."/>
            <person name="Ishida J."/>
            <person name="Jiang P.X."/>
            <person name="Jones T."/>
            <person name="Kawai J."/>
            <person name="Kamiya A."/>
            <person name="Meyers C."/>
            <person name="Nakajima M."/>
            <person name="Narusaka M."/>
            <person name="Seki M."/>
            <person name="Sakurai T."/>
            <person name="Satou M."/>
            <person name="Tamse R."/>
            <person name="Vaysberg M."/>
            <person name="Wallender E.K."/>
            <person name="Wong C."/>
            <person name="Yamamura Y."/>
            <person name="Yuan S."/>
            <person name="Shinozaki K."/>
            <person name="Davis R.W."/>
            <person name="Theologis A."/>
            <person name="Ecker J.R."/>
        </authorList>
    </citation>
    <scope>NUCLEOTIDE SEQUENCE [LARGE SCALE MRNA]</scope>
    <source>
        <strain>cv. Columbia</strain>
    </source>
</reference>
<reference key="5">
    <citation type="journal article" date="2013" name="BMC Plant Biol.">
        <title>Enhanced resistance to the cellulose biosynthetic inhibitors, thaxtomin A and isoxaben in Arabidopsis thaliana mutants, also provides specific co-resistance to the auxin transport inhibitor, 1-NPA.</title>
        <authorList>
            <person name="Tegg R.S."/>
            <person name="Shabala S.N."/>
            <person name="Cuin T.A."/>
            <person name="Davies N.W."/>
            <person name="Wilson C.R."/>
        </authorList>
    </citation>
    <scope>FUNCTION</scope>
    <scope>DISRUPTION PHENOTYPE</scope>
</reference>
<reference key="6">
    <citation type="journal article" date="2013" name="Nat. Commun.">
        <title>Mitochondrial AtPAM16 is required for plant survival and the negative regulation of plant immunity.</title>
        <authorList>
            <person name="Huang Y."/>
            <person name="Chen X."/>
            <person name="Liu Y."/>
            <person name="Roth C."/>
            <person name="Copeland C."/>
            <person name="McFarlane H.E."/>
            <person name="Huang S."/>
            <person name="Lipka V."/>
            <person name="Wiermer M."/>
            <person name="Li X."/>
        </authorList>
    </citation>
    <scope>FUNCTION</scope>
    <scope>DISRUPTION PHENOTYPE</scope>
    <scope>SUBCELLULAR LOCATION</scope>
    <source>
        <strain>cv. Columbia</strain>
    </source>
</reference>
<reference key="7">
    <citation type="journal article" date="2013" name="PLoS ONE">
        <title>Comparative analysis of putative orthologues of mitochondrial import motor subunit: Pam18 and Pam16 in plants.</title>
        <authorList>
            <person name="Chen X."/>
            <person name="Ghazanfar B."/>
            <person name="Khan A.R."/>
            <person name="Hayat S."/>
            <person name="Cheng Z."/>
        </authorList>
    </citation>
    <scope>DEVELOPMENTAL STAGE</scope>
    <scope>TISSUE SPECIFICITY</scope>
    <scope>INDUCTION BY HEAT; SALT AND DROUGHT</scope>
    <scope>GENE FAMILY</scope>
    <scope>NOMENCLATURE</scope>
    <scope>REVIEW</scope>
</reference>